<protein>
    <recommendedName>
        <fullName evidence="1">ATP-dependent Clp protease ATP-binding subunit ClpX</fullName>
    </recommendedName>
</protein>
<name>CLPX_DECAR</name>
<sequence>MSKGGQEKLLYCSFCGKSQHEVKKLIAGPSVFICDECISLCNDIIRDELPEEAAKAGRSDLPTPREISSILDQYVIGQEVAKRILSVAVYNHYKRLRHTAKNAGDVELSKSNILLIGPTGSGKTLLAQTLARLLNVPFVMADATTLTEAGYVGEDVENIIQKLLQKCDYDVEKAQQGIVYIDEIDKISRKSDNPSITRDVSGEGVQQALLKLIEGTTASIPPQGGRKHPNQDFVQVDTTNILFICGGAFAGLEKVIQSRSERGGIGFGAEVKSKDDGKAVGKILLDAEPEDLIKFGLIPELIGRLPVVATLQELEESALVQILTEPKNALVKQYQKLFSMEDVELEIRPTALSAIAKKALARKTGARGLRSILEHALLDTMYELPGMESVEKVVIDENTITGDTPPLLIYADQPKVSGSN</sequence>
<evidence type="ECO:0000255" key="1">
    <source>
        <dbReference type="HAMAP-Rule" id="MF_00175"/>
    </source>
</evidence>
<evidence type="ECO:0000255" key="2">
    <source>
        <dbReference type="PROSITE-ProRule" id="PRU01250"/>
    </source>
</evidence>
<dbReference type="EMBL" id="CP000089">
    <property type="protein sequence ID" value="AAZ46464.1"/>
    <property type="molecule type" value="Genomic_DNA"/>
</dbReference>
<dbReference type="SMR" id="Q47FB7"/>
<dbReference type="STRING" id="159087.Daro_1717"/>
<dbReference type="KEGG" id="dar:Daro_1717"/>
<dbReference type="eggNOG" id="COG1219">
    <property type="taxonomic scope" value="Bacteria"/>
</dbReference>
<dbReference type="HOGENOM" id="CLU_014218_8_2_4"/>
<dbReference type="OrthoDB" id="9804062at2"/>
<dbReference type="GO" id="GO:0009376">
    <property type="term" value="C:HslUV protease complex"/>
    <property type="evidence" value="ECO:0007669"/>
    <property type="project" value="TreeGrafter"/>
</dbReference>
<dbReference type="GO" id="GO:0005524">
    <property type="term" value="F:ATP binding"/>
    <property type="evidence" value="ECO:0007669"/>
    <property type="project" value="UniProtKB-UniRule"/>
</dbReference>
<dbReference type="GO" id="GO:0016887">
    <property type="term" value="F:ATP hydrolysis activity"/>
    <property type="evidence" value="ECO:0007669"/>
    <property type="project" value="InterPro"/>
</dbReference>
<dbReference type="GO" id="GO:0140662">
    <property type="term" value="F:ATP-dependent protein folding chaperone"/>
    <property type="evidence" value="ECO:0007669"/>
    <property type="project" value="InterPro"/>
</dbReference>
<dbReference type="GO" id="GO:0046983">
    <property type="term" value="F:protein dimerization activity"/>
    <property type="evidence" value="ECO:0007669"/>
    <property type="project" value="InterPro"/>
</dbReference>
<dbReference type="GO" id="GO:0051082">
    <property type="term" value="F:unfolded protein binding"/>
    <property type="evidence" value="ECO:0007669"/>
    <property type="project" value="UniProtKB-UniRule"/>
</dbReference>
<dbReference type="GO" id="GO:0008270">
    <property type="term" value="F:zinc ion binding"/>
    <property type="evidence" value="ECO:0007669"/>
    <property type="project" value="InterPro"/>
</dbReference>
<dbReference type="GO" id="GO:0051301">
    <property type="term" value="P:cell division"/>
    <property type="evidence" value="ECO:0007669"/>
    <property type="project" value="TreeGrafter"/>
</dbReference>
<dbReference type="GO" id="GO:0051603">
    <property type="term" value="P:proteolysis involved in protein catabolic process"/>
    <property type="evidence" value="ECO:0007669"/>
    <property type="project" value="TreeGrafter"/>
</dbReference>
<dbReference type="CDD" id="cd19497">
    <property type="entry name" value="RecA-like_ClpX"/>
    <property type="match status" value="1"/>
</dbReference>
<dbReference type="FunFam" id="1.10.8.60:FF:000002">
    <property type="entry name" value="ATP-dependent Clp protease ATP-binding subunit ClpX"/>
    <property type="match status" value="1"/>
</dbReference>
<dbReference type="FunFam" id="3.40.50.300:FF:000005">
    <property type="entry name" value="ATP-dependent Clp protease ATP-binding subunit ClpX"/>
    <property type="match status" value="1"/>
</dbReference>
<dbReference type="Gene3D" id="1.10.8.60">
    <property type="match status" value="1"/>
</dbReference>
<dbReference type="Gene3D" id="6.20.220.10">
    <property type="entry name" value="ClpX chaperone, C4-type zinc finger domain"/>
    <property type="match status" value="1"/>
</dbReference>
<dbReference type="Gene3D" id="3.40.50.300">
    <property type="entry name" value="P-loop containing nucleotide triphosphate hydrolases"/>
    <property type="match status" value="1"/>
</dbReference>
<dbReference type="HAMAP" id="MF_00175">
    <property type="entry name" value="ClpX"/>
    <property type="match status" value="1"/>
</dbReference>
<dbReference type="InterPro" id="IPR003593">
    <property type="entry name" value="AAA+_ATPase"/>
</dbReference>
<dbReference type="InterPro" id="IPR050052">
    <property type="entry name" value="ATP-dep_Clp_protease_ClpX"/>
</dbReference>
<dbReference type="InterPro" id="IPR003959">
    <property type="entry name" value="ATPase_AAA_core"/>
</dbReference>
<dbReference type="InterPro" id="IPR019489">
    <property type="entry name" value="Clp_ATPase_C"/>
</dbReference>
<dbReference type="InterPro" id="IPR004487">
    <property type="entry name" value="Clp_protease_ATP-bd_su_ClpX"/>
</dbReference>
<dbReference type="InterPro" id="IPR046425">
    <property type="entry name" value="ClpX_bact"/>
</dbReference>
<dbReference type="InterPro" id="IPR027417">
    <property type="entry name" value="P-loop_NTPase"/>
</dbReference>
<dbReference type="InterPro" id="IPR010603">
    <property type="entry name" value="Znf_CppX_C4"/>
</dbReference>
<dbReference type="InterPro" id="IPR038366">
    <property type="entry name" value="Znf_CppX_C4_sf"/>
</dbReference>
<dbReference type="NCBIfam" id="TIGR00382">
    <property type="entry name" value="clpX"/>
    <property type="match status" value="1"/>
</dbReference>
<dbReference type="NCBIfam" id="NF003745">
    <property type="entry name" value="PRK05342.1"/>
    <property type="match status" value="1"/>
</dbReference>
<dbReference type="PANTHER" id="PTHR48102:SF7">
    <property type="entry name" value="ATP-DEPENDENT CLP PROTEASE ATP-BINDING SUBUNIT CLPX-LIKE, MITOCHONDRIAL"/>
    <property type="match status" value="1"/>
</dbReference>
<dbReference type="PANTHER" id="PTHR48102">
    <property type="entry name" value="ATP-DEPENDENT CLP PROTEASE ATP-BINDING SUBUNIT CLPX-LIKE, MITOCHONDRIAL-RELATED"/>
    <property type="match status" value="1"/>
</dbReference>
<dbReference type="Pfam" id="PF07724">
    <property type="entry name" value="AAA_2"/>
    <property type="match status" value="1"/>
</dbReference>
<dbReference type="Pfam" id="PF10431">
    <property type="entry name" value="ClpB_D2-small"/>
    <property type="match status" value="1"/>
</dbReference>
<dbReference type="Pfam" id="PF06689">
    <property type="entry name" value="zf-C4_ClpX"/>
    <property type="match status" value="1"/>
</dbReference>
<dbReference type="SMART" id="SM00382">
    <property type="entry name" value="AAA"/>
    <property type="match status" value="1"/>
</dbReference>
<dbReference type="SMART" id="SM01086">
    <property type="entry name" value="ClpB_D2-small"/>
    <property type="match status" value="1"/>
</dbReference>
<dbReference type="SMART" id="SM00994">
    <property type="entry name" value="zf-C4_ClpX"/>
    <property type="match status" value="1"/>
</dbReference>
<dbReference type="SUPFAM" id="SSF57716">
    <property type="entry name" value="Glucocorticoid receptor-like (DNA-binding domain)"/>
    <property type="match status" value="1"/>
</dbReference>
<dbReference type="SUPFAM" id="SSF52540">
    <property type="entry name" value="P-loop containing nucleoside triphosphate hydrolases"/>
    <property type="match status" value="1"/>
</dbReference>
<dbReference type="PROSITE" id="PS51902">
    <property type="entry name" value="CLPX_ZB"/>
    <property type="match status" value="1"/>
</dbReference>
<gene>
    <name evidence="1" type="primary">clpX</name>
    <name type="ordered locus">Daro_1717</name>
</gene>
<feature type="chain" id="PRO_1000077156" description="ATP-dependent Clp protease ATP-binding subunit ClpX">
    <location>
        <begin position="1"/>
        <end position="420"/>
    </location>
</feature>
<feature type="domain" description="ClpX-type ZB" evidence="2">
    <location>
        <begin position="1"/>
        <end position="53"/>
    </location>
</feature>
<feature type="binding site" evidence="2">
    <location>
        <position position="12"/>
    </location>
    <ligand>
        <name>Zn(2+)</name>
        <dbReference type="ChEBI" id="CHEBI:29105"/>
    </ligand>
</feature>
<feature type="binding site" evidence="2">
    <location>
        <position position="15"/>
    </location>
    <ligand>
        <name>Zn(2+)</name>
        <dbReference type="ChEBI" id="CHEBI:29105"/>
    </ligand>
</feature>
<feature type="binding site" evidence="2">
    <location>
        <position position="34"/>
    </location>
    <ligand>
        <name>Zn(2+)</name>
        <dbReference type="ChEBI" id="CHEBI:29105"/>
    </ligand>
</feature>
<feature type="binding site" evidence="2">
    <location>
        <position position="37"/>
    </location>
    <ligand>
        <name>Zn(2+)</name>
        <dbReference type="ChEBI" id="CHEBI:29105"/>
    </ligand>
</feature>
<feature type="binding site" evidence="1">
    <location>
        <begin position="118"/>
        <end position="125"/>
    </location>
    <ligand>
        <name>ATP</name>
        <dbReference type="ChEBI" id="CHEBI:30616"/>
    </ligand>
</feature>
<keyword id="KW-0067">ATP-binding</keyword>
<keyword id="KW-0143">Chaperone</keyword>
<keyword id="KW-0479">Metal-binding</keyword>
<keyword id="KW-0547">Nucleotide-binding</keyword>
<keyword id="KW-0862">Zinc</keyword>
<proteinExistence type="inferred from homology"/>
<organism>
    <name type="scientific">Dechloromonas aromatica (strain RCB)</name>
    <dbReference type="NCBI Taxonomy" id="159087"/>
    <lineage>
        <taxon>Bacteria</taxon>
        <taxon>Pseudomonadati</taxon>
        <taxon>Pseudomonadota</taxon>
        <taxon>Betaproteobacteria</taxon>
        <taxon>Rhodocyclales</taxon>
        <taxon>Azonexaceae</taxon>
        <taxon>Dechloromonas</taxon>
    </lineage>
</organism>
<comment type="function">
    <text evidence="1">ATP-dependent specificity component of the Clp protease. It directs the protease to specific substrates. Can perform chaperone functions in the absence of ClpP.</text>
</comment>
<comment type="subunit">
    <text evidence="1">Component of the ClpX-ClpP complex. Forms a hexameric ring that, in the presence of ATP, binds to fourteen ClpP subunits assembled into a disk-like structure with a central cavity, resembling the structure of eukaryotic proteasomes.</text>
</comment>
<comment type="similarity">
    <text evidence="1">Belongs to the ClpX chaperone family.</text>
</comment>
<accession>Q47FB7</accession>
<reference key="1">
    <citation type="journal article" date="2009" name="BMC Genomics">
        <title>Metabolic analysis of the soil microbe Dechloromonas aromatica str. RCB: indications of a surprisingly complex life-style and cryptic anaerobic pathways for aromatic degradation.</title>
        <authorList>
            <person name="Salinero K.K."/>
            <person name="Keller K."/>
            <person name="Feil W.S."/>
            <person name="Feil H."/>
            <person name="Trong S."/>
            <person name="Di Bartolo G."/>
            <person name="Lapidus A."/>
        </authorList>
    </citation>
    <scope>NUCLEOTIDE SEQUENCE [LARGE SCALE GENOMIC DNA]</scope>
    <source>
        <strain>RCB</strain>
    </source>
</reference>